<comment type="cofactor">
    <cofactor evidence="2">
        <name>[4Fe-4S] cluster</name>
        <dbReference type="ChEBI" id="CHEBI:49883"/>
    </cofactor>
    <text evidence="2">Binds 1 [4Fe-4S] cluster.</text>
</comment>
<comment type="subunit">
    <text>FHL comprises of a formate dehydrogenase, unidentified electron carriers and a hydrogenase (isoenzyme 3). In this non-energy conserving pathway molecular hydrogen and carbodioxide from formate are released.</text>
</comment>
<comment type="interaction">
    <interactant intactId="EBI-541977">
        <id>P16433</id>
    </interactant>
    <interactant intactId="EBI-1121603">
        <id>P07658</id>
        <label>fdhF</label>
    </interactant>
    <organismsDiffer>false</organismsDiffer>
    <experiments>3</experiments>
</comment>
<comment type="interaction">
    <interactant intactId="EBI-541977">
        <id>P16433</id>
    </interactant>
    <interactant intactId="EBI-557795">
        <id>P45464</id>
        <label>lpoA</label>
    </interactant>
    <organismsDiffer>false</organismsDiffer>
    <experiments>2</experiments>
</comment>
<comment type="interaction">
    <interactant intactId="EBI-541977">
        <id>P16433</id>
    </interactant>
    <interactant intactId="EBI-541886">
        <id>P30750</id>
        <label>metN</label>
    </interactant>
    <organismsDiffer>false</organismsDiffer>
    <experiments>6</experiments>
</comment>
<comment type="interaction">
    <interactant intactId="EBI-541977">
        <id>P16433</id>
    </interactant>
    <interactant intactId="EBI-541895">
        <id>P0A9F1</id>
        <label>mntR</label>
    </interactant>
    <organismsDiffer>false</organismsDiffer>
    <experiments>4</experiments>
</comment>
<comment type="similarity">
    <text evidence="2">Belongs to the complex I 20 kDa subunit family.</text>
</comment>
<dbReference type="EMBL" id="X17506">
    <property type="protein sequence ID" value="CAA35552.1"/>
    <property type="molecule type" value="Genomic_DNA"/>
</dbReference>
<dbReference type="EMBL" id="U29579">
    <property type="protein sequence ID" value="AAA69229.1"/>
    <property type="molecule type" value="Genomic_DNA"/>
</dbReference>
<dbReference type="EMBL" id="U00096">
    <property type="protein sequence ID" value="AAC75761.1"/>
    <property type="molecule type" value="Genomic_DNA"/>
</dbReference>
<dbReference type="EMBL" id="AP009048">
    <property type="protein sequence ID" value="BAE76796.1"/>
    <property type="molecule type" value="Genomic_DNA"/>
</dbReference>
<dbReference type="PIR" id="S08625">
    <property type="entry name" value="S08625"/>
</dbReference>
<dbReference type="RefSeq" id="NP_417199.1">
    <property type="nucleotide sequence ID" value="NC_000913.3"/>
</dbReference>
<dbReference type="RefSeq" id="WP_000067392.1">
    <property type="nucleotide sequence ID" value="NZ_LN832404.1"/>
</dbReference>
<dbReference type="PDB" id="7Z0S">
    <property type="method" value="EM"/>
    <property type="resolution" value="2.60 A"/>
    <property type="chains" value="G=1-255"/>
</dbReference>
<dbReference type="PDB" id="7Z0T">
    <property type="method" value="EM"/>
    <property type="resolution" value="3.40 A"/>
    <property type="chains" value="G=1-255"/>
</dbReference>
<dbReference type="PDBsum" id="7Z0S"/>
<dbReference type="PDBsum" id="7Z0T"/>
<dbReference type="EMDB" id="EMD-14429"/>
<dbReference type="EMDB" id="EMD-14430"/>
<dbReference type="SMR" id="P16433"/>
<dbReference type="BioGRID" id="4262939">
    <property type="interactions" value="23"/>
</dbReference>
<dbReference type="BioGRID" id="851523">
    <property type="interactions" value="3"/>
</dbReference>
<dbReference type="ComplexPortal" id="CPX-317">
    <property type="entry name" value="Formate hydrogenlyase-H/Hydrogenase-3 complex"/>
</dbReference>
<dbReference type="DIP" id="DIP-9977N"/>
<dbReference type="FunCoup" id="P16433">
    <property type="interactions" value="67"/>
</dbReference>
<dbReference type="IntAct" id="P16433">
    <property type="interactions" value="10"/>
</dbReference>
<dbReference type="MINT" id="P16433"/>
<dbReference type="STRING" id="511145.b2719"/>
<dbReference type="TCDB" id="3.D.1.9.2">
    <property type="family name" value="the h+ or na+-translocating nadh dehydrogenase (ndh) family"/>
</dbReference>
<dbReference type="PaxDb" id="511145-b2719"/>
<dbReference type="EnsemblBacteria" id="AAC75761">
    <property type="protein sequence ID" value="AAC75761"/>
    <property type="gene ID" value="b2719"/>
</dbReference>
<dbReference type="GeneID" id="947191"/>
<dbReference type="KEGG" id="ecj:JW2689"/>
<dbReference type="KEGG" id="eco:b2719"/>
<dbReference type="KEGG" id="ecoc:C3026_14960"/>
<dbReference type="PATRIC" id="fig|1411691.4.peg.4022"/>
<dbReference type="EchoBASE" id="EB0475"/>
<dbReference type="eggNOG" id="COG3260">
    <property type="taxonomic scope" value="Bacteria"/>
</dbReference>
<dbReference type="HOGENOM" id="CLU_088839_0_0_6"/>
<dbReference type="InParanoid" id="P16433"/>
<dbReference type="OMA" id="AYGACGC"/>
<dbReference type="OrthoDB" id="9786737at2"/>
<dbReference type="PhylomeDB" id="P16433"/>
<dbReference type="BioCyc" id="EcoCyc:HYCG-MONOMER"/>
<dbReference type="BioCyc" id="MetaCyc:HYCG-MONOMER"/>
<dbReference type="PRO" id="PR:P16433"/>
<dbReference type="Proteomes" id="UP000000625">
    <property type="component" value="Chromosome"/>
</dbReference>
<dbReference type="GO" id="GO:0009326">
    <property type="term" value="C:formate dehydrogenase complex"/>
    <property type="evidence" value="ECO:0000353"/>
    <property type="project" value="ComplexPortal"/>
</dbReference>
<dbReference type="GO" id="GO:0051539">
    <property type="term" value="F:4 iron, 4 sulfur cluster binding"/>
    <property type="evidence" value="ECO:0007669"/>
    <property type="project" value="UniProtKB-KW"/>
</dbReference>
<dbReference type="GO" id="GO:0046872">
    <property type="term" value="F:metal ion binding"/>
    <property type="evidence" value="ECO:0007669"/>
    <property type="project" value="UniProtKB-KW"/>
</dbReference>
<dbReference type="GO" id="GO:0008137">
    <property type="term" value="F:NADH dehydrogenase (ubiquinone) activity"/>
    <property type="evidence" value="ECO:0007669"/>
    <property type="project" value="InterPro"/>
</dbReference>
<dbReference type="GO" id="GO:0048038">
    <property type="term" value="F:quinone binding"/>
    <property type="evidence" value="ECO:0007669"/>
    <property type="project" value="InterPro"/>
</dbReference>
<dbReference type="GO" id="GO:0019645">
    <property type="term" value="P:anaerobic electron transport chain"/>
    <property type="evidence" value="ECO:0000314"/>
    <property type="project" value="ComplexPortal"/>
</dbReference>
<dbReference type="GO" id="GO:0009061">
    <property type="term" value="P:anaerobic respiration"/>
    <property type="evidence" value="ECO:0000314"/>
    <property type="project" value="ComplexPortal"/>
</dbReference>
<dbReference type="GO" id="GO:0015944">
    <property type="term" value="P:formate oxidation"/>
    <property type="evidence" value="ECO:0000314"/>
    <property type="project" value="ComplexPortal"/>
</dbReference>
<dbReference type="GO" id="GO:0006007">
    <property type="term" value="P:glucose catabolic process"/>
    <property type="evidence" value="ECO:0000314"/>
    <property type="project" value="ComplexPortal"/>
</dbReference>
<dbReference type="Gene3D" id="3.40.50.12280">
    <property type="match status" value="1"/>
</dbReference>
<dbReference type="InterPro" id="IPR052375">
    <property type="entry name" value="Complex_I_20kDa-like"/>
</dbReference>
<dbReference type="InterPro" id="IPR006137">
    <property type="entry name" value="NADH_UbQ_OxRdtase-like_20kDa"/>
</dbReference>
<dbReference type="InterPro" id="IPR006138">
    <property type="entry name" value="NADH_UQ_OxRdtase_20Kd_su"/>
</dbReference>
<dbReference type="NCBIfam" id="NF005012">
    <property type="entry name" value="PRK06411.1"/>
    <property type="match status" value="1"/>
</dbReference>
<dbReference type="PANTHER" id="PTHR42989:SF1">
    <property type="entry name" value="FORMATE HYDROGENLYASE SUBUNIT 7-RELATED"/>
    <property type="match status" value="1"/>
</dbReference>
<dbReference type="PANTHER" id="PTHR42989">
    <property type="entry name" value="HYDROGENASE-4 COMPONENT I"/>
    <property type="match status" value="1"/>
</dbReference>
<dbReference type="Pfam" id="PF01058">
    <property type="entry name" value="Oxidored_q6"/>
    <property type="match status" value="1"/>
</dbReference>
<dbReference type="SUPFAM" id="SSF56770">
    <property type="entry name" value="HydA/Nqo6-like"/>
    <property type="match status" value="1"/>
</dbReference>
<dbReference type="PROSITE" id="PS01150">
    <property type="entry name" value="COMPLEX1_20K"/>
    <property type="match status" value="1"/>
</dbReference>
<accession>P16433</accession>
<accession>Q2MAB0</accession>
<accession>Q46881</accession>
<protein>
    <recommendedName>
        <fullName>Formate hydrogenlyase subunit 7</fullName>
        <shortName>FHL subunit 7</shortName>
    </recommendedName>
    <alternativeName>
        <fullName>Hydrogenase-3 component G</fullName>
    </alternativeName>
</protein>
<feature type="chain" id="PRO_0000118780" description="Formate hydrogenlyase subunit 7">
    <location>
        <begin position="1"/>
        <end position="255"/>
    </location>
</feature>
<feature type="binding site" evidence="1">
    <location>
        <position position="45"/>
    </location>
    <ligand>
        <name>[4Fe-4S] cluster</name>
        <dbReference type="ChEBI" id="CHEBI:49883"/>
    </ligand>
</feature>
<feature type="binding site" evidence="1">
    <location>
        <position position="51"/>
    </location>
    <ligand>
        <name>[4Fe-4S] cluster</name>
        <dbReference type="ChEBI" id="CHEBI:49883"/>
    </ligand>
</feature>
<feature type="binding site" evidence="1">
    <location>
        <position position="115"/>
    </location>
    <ligand>
        <name>[4Fe-4S] cluster</name>
        <dbReference type="ChEBI" id="CHEBI:49883"/>
    </ligand>
</feature>
<feature type="binding site" evidence="1">
    <location>
        <position position="145"/>
    </location>
    <ligand>
        <name>[4Fe-4S] cluster</name>
        <dbReference type="ChEBI" id="CHEBI:49883"/>
    </ligand>
</feature>
<feature type="sequence conflict" description="In Ref. 1; CAA35552." evidence="2" ref="1">
    <original>A</original>
    <variation>G</variation>
    <location>
        <position position="57"/>
    </location>
</feature>
<feature type="helix" evidence="3">
    <location>
        <begin position="21"/>
        <end position="24"/>
    </location>
</feature>
<feature type="helix" evidence="3">
    <location>
        <begin position="27"/>
        <end position="33"/>
    </location>
</feature>
<feature type="strand" evidence="4">
    <location>
        <begin position="34"/>
        <end position="36"/>
    </location>
</feature>
<feature type="strand" evidence="3">
    <location>
        <begin position="38"/>
        <end position="44"/>
    </location>
</feature>
<feature type="helix" evidence="3">
    <location>
        <begin position="50"/>
        <end position="56"/>
    </location>
</feature>
<feature type="strand" evidence="3">
    <location>
        <begin position="59"/>
        <end position="63"/>
    </location>
</feature>
<feature type="helix" evidence="3">
    <location>
        <begin position="66"/>
        <end position="68"/>
    </location>
</feature>
<feature type="strand" evidence="3">
    <location>
        <begin position="70"/>
        <end position="72"/>
    </location>
</feature>
<feature type="helix" evidence="3">
    <location>
        <begin position="76"/>
        <end position="78"/>
    </location>
</feature>
<feature type="strand" evidence="3">
    <location>
        <begin position="80"/>
        <end position="86"/>
    </location>
</feature>
<feature type="turn" evidence="4">
    <location>
        <begin position="90"/>
        <end position="92"/>
    </location>
</feature>
<feature type="helix" evidence="3">
    <location>
        <begin position="93"/>
        <end position="101"/>
    </location>
</feature>
<feature type="strand" evidence="3">
    <location>
        <begin position="108"/>
        <end position="112"/>
    </location>
</feature>
<feature type="helix" evidence="3">
    <location>
        <begin position="113"/>
        <end position="118"/>
    </location>
</feature>
<feature type="helix" evidence="3">
    <location>
        <begin position="120"/>
        <end position="122"/>
    </location>
</feature>
<feature type="helix" evidence="3">
    <location>
        <begin position="132"/>
        <end position="134"/>
    </location>
</feature>
<feature type="strand" evidence="3">
    <location>
        <begin position="139"/>
        <end position="142"/>
    </location>
</feature>
<feature type="helix" evidence="3">
    <location>
        <begin position="149"/>
        <end position="159"/>
    </location>
</feature>
<feature type="helix" evidence="3">
    <location>
        <begin position="175"/>
        <end position="177"/>
    </location>
</feature>
<feature type="turn" evidence="3">
    <location>
        <begin position="183"/>
        <end position="186"/>
    </location>
</feature>
<feature type="helix" evidence="3">
    <location>
        <begin position="189"/>
        <end position="203"/>
    </location>
</feature>
<feature type="helix" evidence="3">
    <location>
        <begin position="205"/>
        <end position="219"/>
    </location>
</feature>
<feature type="helix" evidence="3">
    <location>
        <begin position="223"/>
        <end position="233"/>
    </location>
</feature>
<feature type="helix" evidence="3">
    <location>
        <begin position="236"/>
        <end position="252"/>
    </location>
</feature>
<name>HYCG_ECOLI</name>
<sequence>MSNLLGPRDANGIPVPMTVDESIASMKASLLKKIKRSAYVYRVDCGGCNGCEIEIFATLSPLFDAERFGIKVVPSPRHADILLFTGAVTRAMRSPALRAWQSAPDPKICISYGACGNSGGIFHDLYCVWGGTDKIVPVDVYIPGCPPTPAATLYGFAMALGLLEQKIHARGPGELDEQPAEILHGDMVQPLRVKVDREARRLAGYRYGRQIADDYLTQLGQGEEQVARWLEAENDPRLNEIVSHLNHVVEEARIR</sequence>
<organism>
    <name type="scientific">Escherichia coli (strain K12)</name>
    <dbReference type="NCBI Taxonomy" id="83333"/>
    <lineage>
        <taxon>Bacteria</taxon>
        <taxon>Pseudomonadati</taxon>
        <taxon>Pseudomonadota</taxon>
        <taxon>Gammaproteobacteria</taxon>
        <taxon>Enterobacterales</taxon>
        <taxon>Enterobacteriaceae</taxon>
        <taxon>Escherichia</taxon>
    </lineage>
</organism>
<keyword id="KW-0002">3D-structure</keyword>
<keyword id="KW-0004">4Fe-4S</keyword>
<keyword id="KW-0408">Iron</keyword>
<keyword id="KW-0411">Iron-sulfur</keyword>
<keyword id="KW-0479">Metal-binding</keyword>
<keyword id="KW-0560">Oxidoreductase</keyword>
<keyword id="KW-1185">Reference proteome</keyword>
<gene>
    <name type="primary">hycG</name>
    <name type="synonym">hevG</name>
    <name type="ordered locus">b2719</name>
    <name type="ordered locus">JW2689</name>
</gene>
<proteinExistence type="evidence at protein level"/>
<reference key="1">
    <citation type="journal article" date="1990" name="Mol. Microbiol.">
        <title>Nucleotide sequence and expression of an operon in Escherichia coli coding for formate hydrogenlyase components.</title>
        <authorList>
            <person name="Boehm R."/>
            <person name="Sauter M."/>
            <person name="Boeck A."/>
        </authorList>
    </citation>
    <scope>NUCLEOTIDE SEQUENCE [GENOMIC DNA]</scope>
    <source>
        <strain>K12 / MC4100 / ATCC 35695 / DSM 6574</strain>
    </source>
</reference>
<reference key="2">
    <citation type="journal article" date="1997" name="Science">
        <title>The complete genome sequence of Escherichia coli K-12.</title>
        <authorList>
            <person name="Blattner F.R."/>
            <person name="Plunkett G. III"/>
            <person name="Bloch C.A."/>
            <person name="Perna N.T."/>
            <person name="Burland V."/>
            <person name="Riley M."/>
            <person name="Collado-Vides J."/>
            <person name="Glasner J.D."/>
            <person name="Rode C.K."/>
            <person name="Mayhew G.F."/>
            <person name="Gregor J."/>
            <person name="Davis N.W."/>
            <person name="Kirkpatrick H.A."/>
            <person name="Goeden M.A."/>
            <person name="Rose D.J."/>
            <person name="Mau B."/>
            <person name="Shao Y."/>
        </authorList>
    </citation>
    <scope>NUCLEOTIDE SEQUENCE [LARGE SCALE GENOMIC DNA]</scope>
    <source>
        <strain>K12 / MG1655 / ATCC 47076</strain>
    </source>
</reference>
<reference key="3">
    <citation type="journal article" date="2006" name="Mol. Syst. Biol.">
        <title>Highly accurate genome sequences of Escherichia coli K-12 strains MG1655 and W3110.</title>
        <authorList>
            <person name="Hayashi K."/>
            <person name="Morooka N."/>
            <person name="Yamamoto Y."/>
            <person name="Fujita K."/>
            <person name="Isono K."/>
            <person name="Choi S."/>
            <person name="Ohtsubo E."/>
            <person name="Baba T."/>
            <person name="Wanner B.L."/>
            <person name="Mori H."/>
            <person name="Horiuchi T."/>
        </authorList>
    </citation>
    <scope>NUCLEOTIDE SEQUENCE [LARGE SCALE GENOMIC DNA]</scope>
    <source>
        <strain>K12 / W3110 / ATCC 27325 / DSM 5911</strain>
    </source>
</reference>
<evidence type="ECO:0000255" key="1"/>
<evidence type="ECO:0000305" key="2"/>
<evidence type="ECO:0007829" key="3">
    <source>
        <dbReference type="PDB" id="7Z0S"/>
    </source>
</evidence>
<evidence type="ECO:0007829" key="4">
    <source>
        <dbReference type="PDB" id="7Z0T"/>
    </source>
</evidence>